<evidence type="ECO:0000255" key="1">
    <source>
        <dbReference type="HAMAP-Rule" id="MF_00122"/>
    </source>
</evidence>
<feature type="chain" id="PRO_1000016128" description="Aspartyl/glutamyl-tRNA(Asn/Gln) amidotransferase subunit C">
    <location>
        <begin position="1"/>
        <end position="93"/>
    </location>
</feature>
<keyword id="KW-0067">ATP-binding</keyword>
<keyword id="KW-0436">Ligase</keyword>
<keyword id="KW-0547">Nucleotide-binding</keyword>
<keyword id="KW-0648">Protein biosynthesis</keyword>
<comment type="function">
    <text evidence="1">Allows the formation of correctly charged Asn-tRNA(Asn) or Gln-tRNA(Gln) through the transamidation of misacylated Asp-tRNA(Asn) or Glu-tRNA(Gln) in organisms which lack either or both of asparaginyl-tRNA or glutaminyl-tRNA synthetases. The reaction takes place in the presence of glutamine and ATP through an activated phospho-Asp-tRNA(Asn) or phospho-Glu-tRNA(Gln).</text>
</comment>
<comment type="catalytic activity">
    <reaction evidence="1">
        <text>L-glutamyl-tRNA(Gln) + L-glutamine + ATP + H2O = L-glutaminyl-tRNA(Gln) + L-glutamate + ADP + phosphate + H(+)</text>
        <dbReference type="Rhea" id="RHEA:17521"/>
        <dbReference type="Rhea" id="RHEA-COMP:9681"/>
        <dbReference type="Rhea" id="RHEA-COMP:9684"/>
        <dbReference type="ChEBI" id="CHEBI:15377"/>
        <dbReference type="ChEBI" id="CHEBI:15378"/>
        <dbReference type="ChEBI" id="CHEBI:29985"/>
        <dbReference type="ChEBI" id="CHEBI:30616"/>
        <dbReference type="ChEBI" id="CHEBI:43474"/>
        <dbReference type="ChEBI" id="CHEBI:58359"/>
        <dbReference type="ChEBI" id="CHEBI:78520"/>
        <dbReference type="ChEBI" id="CHEBI:78521"/>
        <dbReference type="ChEBI" id="CHEBI:456216"/>
    </reaction>
</comment>
<comment type="catalytic activity">
    <reaction evidence="1">
        <text>L-aspartyl-tRNA(Asn) + L-glutamine + ATP + H2O = L-asparaginyl-tRNA(Asn) + L-glutamate + ADP + phosphate + 2 H(+)</text>
        <dbReference type="Rhea" id="RHEA:14513"/>
        <dbReference type="Rhea" id="RHEA-COMP:9674"/>
        <dbReference type="Rhea" id="RHEA-COMP:9677"/>
        <dbReference type="ChEBI" id="CHEBI:15377"/>
        <dbReference type="ChEBI" id="CHEBI:15378"/>
        <dbReference type="ChEBI" id="CHEBI:29985"/>
        <dbReference type="ChEBI" id="CHEBI:30616"/>
        <dbReference type="ChEBI" id="CHEBI:43474"/>
        <dbReference type="ChEBI" id="CHEBI:58359"/>
        <dbReference type="ChEBI" id="CHEBI:78515"/>
        <dbReference type="ChEBI" id="CHEBI:78516"/>
        <dbReference type="ChEBI" id="CHEBI:456216"/>
    </reaction>
</comment>
<comment type="subunit">
    <text evidence="1">Heterotrimer of A, B and C subunits.</text>
</comment>
<comment type="similarity">
    <text evidence="1">Belongs to the GatC family.</text>
</comment>
<name>GATC_HELPH</name>
<accession>Q1CSP9</accession>
<proteinExistence type="inferred from homology"/>
<reference key="1">
    <citation type="journal article" date="2006" name="Proc. Natl. Acad. Sci. U.S.A.">
        <title>The complete genome sequence of a chronic atrophic gastritis Helicobacter pylori strain: evolution during disease progression.</title>
        <authorList>
            <person name="Oh J.D."/>
            <person name="Kling-Baeckhed H."/>
            <person name="Giannakis M."/>
            <person name="Xu J."/>
            <person name="Fulton R.S."/>
            <person name="Fulton L.A."/>
            <person name="Cordum H.S."/>
            <person name="Wang C."/>
            <person name="Elliott G."/>
            <person name="Edwards J."/>
            <person name="Mardis E.R."/>
            <person name="Engstrand L.G."/>
            <person name="Gordon J.I."/>
        </authorList>
    </citation>
    <scope>NUCLEOTIDE SEQUENCE [LARGE SCALE GENOMIC DNA]</scope>
    <source>
        <strain>HPAG1</strain>
    </source>
</reference>
<protein>
    <recommendedName>
        <fullName evidence="1">Aspartyl/glutamyl-tRNA(Asn/Gln) amidotransferase subunit C</fullName>
        <shortName evidence="1">Asp/Glu-ADT subunit C</shortName>
        <ecNumber evidence="1">6.3.5.-</ecNumber>
    </recommendedName>
</protein>
<gene>
    <name evidence="1" type="primary">gatC</name>
    <name type="ordered locus">HPAG1_0956</name>
</gene>
<organism>
    <name type="scientific">Helicobacter pylori (strain HPAG1)</name>
    <dbReference type="NCBI Taxonomy" id="357544"/>
    <lineage>
        <taxon>Bacteria</taxon>
        <taxon>Pseudomonadati</taxon>
        <taxon>Campylobacterota</taxon>
        <taxon>Epsilonproteobacteria</taxon>
        <taxon>Campylobacterales</taxon>
        <taxon>Helicobacteraceae</taxon>
        <taxon>Helicobacter</taxon>
    </lineage>
</organism>
<sequence>MQIDDALLQRLEKLSMLEIKDEHKESVKGHLAEILGFVENIFALETSALKTDTELCTPLREDEPKSQPNTAKEILSQNKHSQDHYFVVPKIIE</sequence>
<dbReference type="EC" id="6.3.5.-" evidence="1"/>
<dbReference type="EMBL" id="CP000241">
    <property type="protein sequence ID" value="ABF85023.1"/>
    <property type="molecule type" value="Genomic_DNA"/>
</dbReference>
<dbReference type="RefSeq" id="WP_001165187.1">
    <property type="nucleotide sequence ID" value="NC_008086.1"/>
</dbReference>
<dbReference type="SMR" id="Q1CSP9"/>
<dbReference type="KEGG" id="hpa:HPAG1_0956"/>
<dbReference type="HOGENOM" id="CLU_105899_2_1_7"/>
<dbReference type="GO" id="GO:0050566">
    <property type="term" value="F:asparaginyl-tRNA synthase (glutamine-hydrolyzing) activity"/>
    <property type="evidence" value="ECO:0007669"/>
    <property type="project" value="RHEA"/>
</dbReference>
<dbReference type="GO" id="GO:0005524">
    <property type="term" value="F:ATP binding"/>
    <property type="evidence" value="ECO:0007669"/>
    <property type="project" value="UniProtKB-KW"/>
</dbReference>
<dbReference type="GO" id="GO:0050567">
    <property type="term" value="F:glutaminyl-tRNA synthase (glutamine-hydrolyzing) activity"/>
    <property type="evidence" value="ECO:0007669"/>
    <property type="project" value="UniProtKB-UniRule"/>
</dbReference>
<dbReference type="GO" id="GO:0006450">
    <property type="term" value="P:regulation of translational fidelity"/>
    <property type="evidence" value="ECO:0007669"/>
    <property type="project" value="InterPro"/>
</dbReference>
<dbReference type="GO" id="GO:0006412">
    <property type="term" value="P:translation"/>
    <property type="evidence" value="ECO:0007669"/>
    <property type="project" value="UniProtKB-UniRule"/>
</dbReference>
<dbReference type="Gene3D" id="1.10.20.60">
    <property type="entry name" value="Glu-tRNAGln amidotransferase C subunit, N-terminal domain"/>
    <property type="match status" value="1"/>
</dbReference>
<dbReference type="HAMAP" id="MF_00122">
    <property type="entry name" value="GatC"/>
    <property type="match status" value="1"/>
</dbReference>
<dbReference type="InterPro" id="IPR036113">
    <property type="entry name" value="Asp/Glu-ADT_sf_sub_c"/>
</dbReference>
<dbReference type="InterPro" id="IPR003837">
    <property type="entry name" value="GatC"/>
</dbReference>
<dbReference type="NCBIfam" id="TIGR00135">
    <property type="entry name" value="gatC"/>
    <property type="match status" value="1"/>
</dbReference>
<dbReference type="Pfam" id="PF02686">
    <property type="entry name" value="GatC"/>
    <property type="match status" value="1"/>
</dbReference>
<dbReference type="SUPFAM" id="SSF141000">
    <property type="entry name" value="Glu-tRNAGln amidotransferase C subunit"/>
    <property type="match status" value="1"/>
</dbReference>